<reference key="1">
    <citation type="journal article" date="2011" name="Proc. Natl. Acad. Sci. U.S.A.">
        <title>Genomic anatomy of Escherichia coli O157:H7 outbreaks.</title>
        <authorList>
            <person name="Eppinger M."/>
            <person name="Mammel M.K."/>
            <person name="Leclerc J.E."/>
            <person name="Ravel J."/>
            <person name="Cebula T.A."/>
        </authorList>
    </citation>
    <scope>NUCLEOTIDE SEQUENCE [LARGE SCALE GENOMIC DNA]</scope>
    <source>
        <strain>EC4115 / EHEC</strain>
    </source>
</reference>
<feature type="chain" id="PRO_1000128877" description="L-rhamnose isomerase">
    <location>
        <begin position="1"/>
        <end position="419"/>
    </location>
</feature>
<feature type="binding site" evidence="1">
    <location>
        <position position="262"/>
    </location>
    <ligand>
        <name>Mn(2+)</name>
        <dbReference type="ChEBI" id="CHEBI:29035"/>
    </ligand>
</feature>
<feature type="binding site" evidence="1">
    <location>
        <position position="294"/>
    </location>
    <ligand>
        <name>Mn(2+)</name>
        <dbReference type="ChEBI" id="CHEBI:29035"/>
    </ligand>
</feature>
<feature type="binding site" evidence="1">
    <location>
        <position position="296"/>
    </location>
    <ligand>
        <name>Mn(2+)</name>
        <dbReference type="ChEBI" id="CHEBI:29035"/>
    </ligand>
</feature>
<keyword id="KW-0963">Cytoplasm</keyword>
<keyword id="KW-0413">Isomerase</keyword>
<keyword id="KW-0464">Manganese</keyword>
<keyword id="KW-0479">Metal-binding</keyword>
<keyword id="KW-0684">Rhamnose metabolism</keyword>
<evidence type="ECO:0000255" key="1">
    <source>
        <dbReference type="HAMAP-Rule" id="MF_00541"/>
    </source>
</evidence>
<gene>
    <name evidence="1" type="primary">rhaA</name>
    <name type="ordered locus">ECH74115_5355</name>
</gene>
<sequence>MTTQLEQAWELAKQRFAAVGIDVEEALRQLDRLPVSMHCWQGDDVSGFENPEGSLTGGIQATGNYPGKARNASELRADLEQAMRLIPGPKRLNLHAIYLESDTPVSRDQIKPEHFKNWVEWAKANQLGLDFNPSCFSHPLSADGFTLSHADDSIRQFWIDHCKASRRVSAYFGEQLGTPSVMNIWIPDGMKDITVDRLAPRQRLLAALDEVISEKLDPAHHIDAVESKLFGIGAESYTVGSNEFYMGYATSRQTALCLDAGHFHPTEVISDKISAAMLYVPQLLLHVSRPVRWDSDHVVLLDDETQAIASEIVRHDLFDRVHIGLDFFDASINRIAAWIIGTRNMKKALLRALLEPTAELRKLEAAGDYTARLALLEEQKSLPWQAVWEMYCQRHDTPAGSEWLESVRAYEKETLSRRG</sequence>
<protein>
    <recommendedName>
        <fullName evidence="1">L-rhamnose isomerase</fullName>
        <ecNumber evidence="1">5.3.1.14</ecNumber>
    </recommendedName>
</protein>
<name>RHAA_ECO5E</name>
<accession>B5YZ40</accession>
<organism>
    <name type="scientific">Escherichia coli O157:H7 (strain EC4115 / EHEC)</name>
    <dbReference type="NCBI Taxonomy" id="444450"/>
    <lineage>
        <taxon>Bacteria</taxon>
        <taxon>Pseudomonadati</taxon>
        <taxon>Pseudomonadota</taxon>
        <taxon>Gammaproteobacteria</taxon>
        <taxon>Enterobacterales</taxon>
        <taxon>Enterobacteriaceae</taxon>
        <taxon>Escherichia</taxon>
    </lineage>
</organism>
<dbReference type="EC" id="5.3.1.14" evidence="1"/>
<dbReference type="EMBL" id="CP001164">
    <property type="protein sequence ID" value="ACI34745.1"/>
    <property type="molecule type" value="Genomic_DNA"/>
</dbReference>
<dbReference type="RefSeq" id="WP_001301857.1">
    <property type="nucleotide sequence ID" value="NC_011353.1"/>
</dbReference>
<dbReference type="SMR" id="B5YZ40"/>
<dbReference type="KEGG" id="ecf:ECH74115_5355"/>
<dbReference type="HOGENOM" id="CLU_052790_0_0_6"/>
<dbReference type="UniPathway" id="UPA00541">
    <property type="reaction ID" value="UER00601"/>
</dbReference>
<dbReference type="GO" id="GO:0005737">
    <property type="term" value="C:cytoplasm"/>
    <property type="evidence" value="ECO:0007669"/>
    <property type="project" value="UniProtKB-SubCell"/>
</dbReference>
<dbReference type="GO" id="GO:0008740">
    <property type="term" value="F:L-rhamnose isomerase activity"/>
    <property type="evidence" value="ECO:0007669"/>
    <property type="project" value="UniProtKB-UniRule"/>
</dbReference>
<dbReference type="GO" id="GO:0030145">
    <property type="term" value="F:manganese ion binding"/>
    <property type="evidence" value="ECO:0007669"/>
    <property type="project" value="UniProtKB-UniRule"/>
</dbReference>
<dbReference type="GO" id="GO:0019324">
    <property type="term" value="P:L-lyxose metabolic process"/>
    <property type="evidence" value="ECO:0007669"/>
    <property type="project" value="TreeGrafter"/>
</dbReference>
<dbReference type="GO" id="GO:0019301">
    <property type="term" value="P:rhamnose catabolic process"/>
    <property type="evidence" value="ECO:0007669"/>
    <property type="project" value="UniProtKB-UniRule"/>
</dbReference>
<dbReference type="FunFam" id="3.20.20.150:FF:000006">
    <property type="entry name" value="L-rhamnose isomerase"/>
    <property type="match status" value="1"/>
</dbReference>
<dbReference type="Gene3D" id="3.20.20.150">
    <property type="entry name" value="Divalent-metal-dependent TIM barrel enzymes"/>
    <property type="match status" value="1"/>
</dbReference>
<dbReference type="HAMAP" id="MF_00541">
    <property type="entry name" value="RhaA"/>
    <property type="match status" value="1"/>
</dbReference>
<dbReference type="InterPro" id="IPR050337">
    <property type="entry name" value="L-rhamnose_isomerase"/>
</dbReference>
<dbReference type="InterPro" id="IPR009308">
    <property type="entry name" value="Rhamnose_isomerase"/>
</dbReference>
<dbReference type="InterPro" id="IPR036237">
    <property type="entry name" value="Xyl_isomerase-like_sf"/>
</dbReference>
<dbReference type="NCBIfam" id="NF002203">
    <property type="entry name" value="PRK01076.1"/>
    <property type="match status" value="1"/>
</dbReference>
<dbReference type="NCBIfam" id="TIGR01748">
    <property type="entry name" value="rhaA"/>
    <property type="match status" value="1"/>
</dbReference>
<dbReference type="PANTHER" id="PTHR30268">
    <property type="entry name" value="L-RHAMNOSE ISOMERASE"/>
    <property type="match status" value="1"/>
</dbReference>
<dbReference type="PANTHER" id="PTHR30268:SF0">
    <property type="entry name" value="L-RHAMNOSE ISOMERASE"/>
    <property type="match status" value="1"/>
</dbReference>
<dbReference type="Pfam" id="PF06134">
    <property type="entry name" value="RhaA"/>
    <property type="match status" value="1"/>
</dbReference>
<dbReference type="SUPFAM" id="SSF51658">
    <property type="entry name" value="Xylose isomerase-like"/>
    <property type="match status" value="1"/>
</dbReference>
<comment type="function">
    <text evidence="1">Catalyzes the interconversion of L-rhamnose and L-rhamnulose.</text>
</comment>
<comment type="catalytic activity">
    <reaction evidence="1">
        <text>L-rhamnopyranose = L-rhamnulose</text>
        <dbReference type="Rhea" id="RHEA:23160"/>
        <dbReference type="ChEBI" id="CHEBI:17897"/>
        <dbReference type="ChEBI" id="CHEBI:62346"/>
        <dbReference type="EC" id="5.3.1.14"/>
    </reaction>
</comment>
<comment type="cofactor">
    <cofactor evidence="1">
        <name>Mn(2+)</name>
        <dbReference type="ChEBI" id="CHEBI:29035"/>
    </cofactor>
    <text evidence="1">Binds 1 Mn(2+) ion per subunit.</text>
</comment>
<comment type="pathway">
    <text evidence="1">Carbohydrate degradation; L-rhamnose degradation; glycerone phosphate from L-rhamnose: step 1/3.</text>
</comment>
<comment type="subunit">
    <text evidence="1">Homotetramer.</text>
</comment>
<comment type="subcellular location">
    <subcellularLocation>
        <location evidence="1">Cytoplasm</location>
    </subcellularLocation>
</comment>
<comment type="similarity">
    <text evidence="1">Belongs to the rhamnose isomerase family.</text>
</comment>
<proteinExistence type="inferred from homology"/>